<name>HSP22_MAIZE</name>
<accession>P24632</accession>
<reference key="1">
    <citation type="journal article" date="1991" name="Plant Mol. Biol.">
        <title>Sequence, identification and characterization of cDNAs encoding two different members of the 18 kDa heat shock family of Zea mays L.</title>
        <authorList>
            <person name="Goping I.S."/>
            <person name="Frappier J.R.H."/>
            <person name="Walden D.B."/>
            <person name="Atkinson B.G."/>
        </authorList>
    </citation>
    <scope>NUCLEOTIDE SEQUENCE [MRNA]</scope>
    <source>
        <strain>cv. Ohio 43</strain>
        <tissue>Radicle</tissue>
    </source>
</reference>
<dbReference type="EMBL" id="X54075">
    <property type="protein sequence ID" value="CAA38012.1"/>
    <property type="molecule type" value="mRNA"/>
</dbReference>
<dbReference type="PIR" id="S14997">
    <property type="entry name" value="S14997"/>
</dbReference>
<dbReference type="RefSeq" id="NP_001105954.1">
    <property type="nucleotide sequence ID" value="NM_001112484.2"/>
</dbReference>
<dbReference type="SMR" id="P24632"/>
<dbReference type="FunCoup" id="P24632">
    <property type="interactions" value="267"/>
</dbReference>
<dbReference type="STRING" id="4577.P24632"/>
<dbReference type="PaxDb" id="4577-GRMZM2G034157_P01"/>
<dbReference type="EnsemblPlants" id="Zm00001eb337690_T001">
    <property type="protein sequence ID" value="Zm00001eb337690_P001"/>
    <property type="gene ID" value="Zm00001eb337690"/>
</dbReference>
<dbReference type="GeneID" id="100037778"/>
<dbReference type="Gramene" id="Zm00001eb337690_T001">
    <property type="protein sequence ID" value="Zm00001eb337690_P001"/>
    <property type="gene ID" value="Zm00001eb337690"/>
</dbReference>
<dbReference type="KEGG" id="zma:100037778"/>
<dbReference type="MaizeGDB" id="51309"/>
<dbReference type="eggNOG" id="KOG0710">
    <property type="taxonomic scope" value="Eukaryota"/>
</dbReference>
<dbReference type="HOGENOM" id="CLU_046737_5_1_1"/>
<dbReference type="InParanoid" id="P24632"/>
<dbReference type="OMA" id="MFVVDMP"/>
<dbReference type="OrthoDB" id="2014994at2759"/>
<dbReference type="Proteomes" id="UP000007305">
    <property type="component" value="Chromosome 8"/>
</dbReference>
<dbReference type="ExpressionAtlas" id="P24632">
    <property type="expression patterns" value="baseline and differential"/>
</dbReference>
<dbReference type="GO" id="GO:0005737">
    <property type="term" value="C:cytoplasm"/>
    <property type="evidence" value="ECO:0007669"/>
    <property type="project" value="UniProtKB-SubCell"/>
</dbReference>
<dbReference type="GO" id="GO:0051082">
    <property type="term" value="F:unfolded protein binding"/>
    <property type="evidence" value="ECO:0000318"/>
    <property type="project" value="GO_Central"/>
</dbReference>
<dbReference type="GO" id="GO:0051259">
    <property type="term" value="P:protein complex oligomerization"/>
    <property type="evidence" value="ECO:0000318"/>
    <property type="project" value="GO_Central"/>
</dbReference>
<dbReference type="GO" id="GO:0006457">
    <property type="term" value="P:protein folding"/>
    <property type="evidence" value="ECO:0000318"/>
    <property type="project" value="GO_Central"/>
</dbReference>
<dbReference type="GO" id="GO:0009408">
    <property type="term" value="P:response to heat"/>
    <property type="evidence" value="ECO:0000318"/>
    <property type="project" value="GO_Central"/>
</dbReference>
<dbReference type="GO" id="GO:0042542">
    <property type="term" value="P:response to hydrogen peroxide"/>
    <property type="evidence" value="ECO:0000318"/>
    <property type="project" value="GO_Central"/>
</dbReference>
<dbReference type="GO" id="GO:0009651">
    <property type="term" value="P:response to salt stress"/>
    <property type="evidence" value="ECO:0000318"/>
    <property type="project" value="GO_Central"/>
</dbReference>
<dbReference type="FunFam" id="2.60.40.790:FF:000010">
    <property type="entry name" value="17.3 kDa class II heat shock protein-like"/>
    <property type="match status" value="1"/>
</dbReference>
<dbReference type="Gene3D" id="2.60.40.790">
    <property type="match status" value="1"/>
</dbReference>
<dbReference type="InterPro" id="IPR002068">
    <property type="entry name" value="A-crystallin/Hsp20_dom"/>
</dbReference>
<dbReference type="InterPro" id="IPR008978">
    <property type="entry name" value="HSP20-like_chaperone"/>
</dbReference>
<dbReference type="InterPro" id="IPR031107">
    <property type="entry name" value="Small_HSP"/>
</dbReference>
<dbReference type="PANTHER" id="PTHR11527">
    <property type="entry name" value="HEAT-SHOCK PROTEIN 20 FAMILY MEMBER"/>
    <property type="match status" value="1"/>
</dbReference>
<dbReference type="Pfam" id="PF00011">
    <property type="entry name" value="HSP20"/>
    <property type="match status" value="1"/>
</dbReference>
<dbReference type="SUPFAM" id="SSF49764">
    <property type="entry name" value="HSP20-like chaperones"/>
    <property type="match status" value="1"/>
</dbReference>
<dbReference type="PROSITE" id="PS01031">
    <property type="entry name" value="SHSP"/>
    <property type="match status" value="1"/>
</dbReference>
<protein>
    <recommendedName>
        <fullName>17.8 kDa class II heat shock protein</fullName>
    </recommendedName>
</protein>
<feature type="chain" id="PRO_0000125994" description="17.8 kDa class II heat shock protein">
    <location>
        <begin position="1"/>
        <end position="164"/>
    </location>
</feature>
<feature type="domain" description="sHSP" evidence="1">
    <location>
        <begin position="48"/>
        <end position="164"/>
    </location>
</feature>
<sequence length="164" mass="17799">MDAVMFGLETPLMAALQHLLDVPDGDAGAGGDNKTGSGGSATRTYVRDARAMAATPADVKELPGAYAFVVDMPGLGTGDIRVQVEDERVLVVSGERRREEREDDAKYLRMERRMGKFMRKFVLPDNADVDKVAAVCRDGVLTVTVEKLPPPEPKKPKTIEVKVA</sequence>
<proteinExistence type="evidence at transcript level"/>
<evidence type="ECO:0000255" key="1">
    <source>
        <dbReference type="PROSITE-ProRule" id="PRU00285"/>
    </source>
</evidence>
<keyword id="KW-0963">Cytoplasm</keyword>
<keyword id="KW-1185">Reference proteome</keyword>
<keyword id="KW-0346">Stress response</keyword>
<comment type="subcellular location">
    <subcellularLocation>
        <location>Cytoplasm</location>
    </subcellularLocation>
</comment>
<comment type="similarity">
    <text evidence="1">Belongs to the small heat shock protein (HSP20) family.</text>
</comment>
<organism>
    <name type="scientific">Zea mays</name>
    <name type="common">Maize</name>
    <dbReference type="NCBI Taxonomy" id="4577"/>
    <lineage>
        <taxon>Eukaryota</taxon>
        <taxon>Viridiplantae</taxon>
        <taxon>Streptophyta</taxon>
        <taxon>Embryophyta</taxon>
        <taxon>Tracheophyta</taxon>
        <taxon>Spermatophyta</taxon>
        <taxon>Magnoliopsida</taxon>
        <taxon>Liliopsida</taxon>
        <taxon>Poales</taxon>
        <taxon>Poaceae</taxon>
        <taxon>PACMAD clade</taxon>
        <taxon>Panicoideae</taxon>
        <taxon>Andropogonodae</taxon>
        <taxon>Andropogoneae</taxon>
        <taxon>Tripsacinae</taxon>
        <taxon>Zea</taxon>
    </lineage>
</organism>